<protein>
    <recommendedName>
        <fullName>Apoptin</fullName>
    </recommendedName>
</protein>
<feature type="chain" id="PRO_0000223009" description="Apoptin">
    <location>
        <begin position="1"/>
        <end position="121"/>
    </location>
</feature>
<feature type="region of interest" description="Disordered" evidence="1">
    <location>
        <begin position="1"/>
        <end position="28"/>
    </location>
</feature>
<feature type="region of interest" description="Disordered" evidence="1">
    <location>
        <begin position="57"/>
        <end position="121"/>
    </location>
</feature>
<feature type="compositionally biased region" description="Polar residues" evidence="1">
    <location>
        <begin position="58"/>
        <end position="70"/>
    </location>
</feature>
<feature type="compositionally biased region" description="Basic and acidic residues" evidence="1">
    <location>
        <begin position="88"/>
        <end position="102"/>
    </location>
</feature>
<gene>
    <name type="primary">VP3</name>
</gene>
<proteinExistence type="evidence at transcript level"/>
<dbReference type="EMBL" id="L14767">
    <property type="protein sequence ID" value="AAD09423.1"/>
    <property type="molecule type" value="Genomic_DNA"/>
</dbReference>
<dbReference type="Proteomes" id="UP000008444">
    <property type="component" value="Genome"/>
</dbReference>
<dbReference type="GO" id="GO:0042025">
    <property type="term" value="C:host cell nucleus"/>
    <property type="evidence" value="ECO:0007669"/>
    <property type="project" value="UniProtKB-SubCell"/>
</dbReference>
<dbReference type="GO" id="GO:0052151">
    <property type="term" value="P:symbiont-mediated activation of host apoptosis"/>
    <property type="evidence" value="ECO:0007669"/>
    <property type="project" value="InterPro"/>
</dbReference>
<dbReference type="GO" id="GO:0039593">
    <property type="term" value="P:symbiont-mediated perturbation of host exit from mitosis"/>
    <property type="evidence" value="ECO:0007669"/>
    <property type="project" value="UniProtKB-KW"/>
</dbReference>
<dbReference type="InterPro" id="IPR006858">
    <property type="entry name" value="CAV_VP3"/>
</dbReference>
<dbReference type="Pfam" id="PF04771">
    <property type="entry name" value="CAV_VP3"/>
    <property type="match status" value="1"/>
</dbReference>
<evidence type="ECO:0000256" key="1">
    <source>
        <dbReference type="SAM" id="MobiDB-lite"/>
    </source>
</evidence>
<evidence type="ECO:0000305" key="2"/>
<name>VP3_CAVCI</name>
<reference key="1">
    <citation type="journal article" date="1996" name="J. Virol.">
        <title>A hypervariable region in VP1 of chicken infectious anemia virus mediates rate of spread and cell tropism in tissue culture.</title>
        <authorList>
            <person name="Renshaw R.W."/>
            <person name="Soine C."/>
            <person name="Weinkle T."/>
            <person name="O'Connell P.H."/>
            <person name="Ohashi K."/>
            <person name="Watson S."/>
            <person name="Lucio B."/>
            <person name="Harrington S."/>
            <person name="Schat K.A."/>
        </authorList>
    </citation>
    <scope>NUCLEOTIDE SEQUENCE [GENOMIC DNA]</scope>
</reference>
<reference key="2">
    <citation type="submission" date="1999-01" db="EMBL/GenBank/DDBJ databases">
        <authorList>
            <person name="Renshaw R.W."/>
        </authorList>
    </citation>
    <scope>SEQUENCE REVISION TO 50</scope>
</reference>
<keyword id="KW-0053">Apoptosis</keyword>
<keyword id="KW-0244">Early protein</keyword>
<keyword id="KW-1048">Host nucleus</keyword>
<keyword id="KW-0945">Host-virus interaction</keyword>
<keyword id="KW-1098">Inhibition of host mitotic exit by virus</keyword>
<keyword id="KW-1121">Modulation of host cell cycle by virus</keyword>
<organismHost>
    <name type="scientific">Gallus gallus</name>
    <name type="common">Chicken</name>
    <dbReference type="NCBI Taxonomy" id="9031"/>
</organismHost>
<organism>
    <name type="scientific">Chicken anemia virus (isolate USA CIA-1)</name>
    <name type="common">CAV</name>
    <dbReference type="NCBI Taxonomy" id="73478"/>
    <lineage>
        <taxon>Viruses</taxon>
        <taxon>Viruses incertae sedis</taxon>
        <taxon>Anelloviridae</taxon>
        <taxon>Gyrovirus</taxon>
        <taxon>Gyrovirus chickenanemia</taxon>
    </lineage>
</organism>
<accession>P54094</accession>
<sequence length="121" mass="13245">MNALQEDTPPGPSTVFRPPTSSRPLETPHCREIRIGIAGITITLSLCGCANARAPTLRSATADNSESTGFKNVPDLRTDQPKPPSKKRSCDPSEYRVSELKESLITTTPSRPRTARRCIRL</sequence>
<comment type="function">
    <text>May act as transcriptional regulator. Induces apoptosis in infected cells. Element of infectious replication cycle.</text>
</comment>
<comment type="subcellular location">
    <subcellularLocation>
        <location>Host nucleus</location>
    </subcellularLocation>
    <text>Host nucleus of infected cells.</text>
</comment>
<comment type="induction">
    <text>VP1 and VP2 are detected 12 hours post infection, while VP3 only after 24 hours.</text>
</comment>
<comment type="similarity">
    <text evidence="2">Belongs to the gyrovirus apoptin family.</text>
</comment>